<protein>
    <recommendedName>
        <fullName evidence="1">Imidazolonepropionase</fullName>
        <ecNumber evidence="1">3.5.2.7</ecNumber>
    </recommendedName>
    <alternativeName>
        <fullName evidence="1">Imidazolone-5-propionate hydrolase</fullName>
    </alternativeName>
</protein>
<keyword id="KW-0963">Cytoplasm</keyword>
<keyword id="KW-0369">Histidine metabolism</keyword>
<keyword id="KW-0378">Hydrolase</keyword>
<keyword id="KW-0408">Iron</keyword>
<keyword id="KW-0479">Metal-binding</keyword>
<keyword id="KW-1185">Reference proteome</keyword>
<keyword id="KW-0862">Zinc</keyword>
<organism>
    <name type="scientific">Shewanella frigidimarina (strain NCIMB 400)</name>
    <dbReference type="NCBI Taxonomy" id="318167"/>
    <lineage>
        <taxon>Bacteria</taxon>
        <taxon>Pseudomonadati</taxon>
        <taxon>Pseudomonadota</taxon>
        <taxon>Gammaproteobacteria</taxon>
        <taxon>Alteromonadales</taxon>
        <taxon>Shewanellaceae</taxon>
        <taxon>Shewanella</taxon>
    </lineage>
</organism>
<sequence>MSWDQVWIDVNVATMDTNIQGAYGVIPQAAIAVKDGKIAWVGPRSELPEFDVLATPVYRGKGGWITPGLIDAHTHLVFAGNRANEFEQRLQGATYAEIARAGGGIISTVNACRDADEAELFELGRQRLNALAREGVTTVEIKSGYGLNTETELKLLRVARELGEHHHIDVSTTFLGAHAIPPEYKDNADAYIDLVVNDMLPAVIAENLADAVDVFCENIAFNLEQTERVLTAAKQAGLQIKLHAEQLTNMGGSALAAKLGAKSVDHIEFLDEAGIKAISESGTCATLLPGAFYFLRETQLPPIDLLRQYKVPMVIASDFNPGSSPICSTLLMLNMACTLFRLTPEEALQGVTINAAKALGIDNNVGSITVGKQADFCLWDITTPAQLAYAYGVNLCKTVVKNGQVVALPN</sequence>
<evidence type="ECO:0000255" key="1">
    <source>
        <dbReference type="HAMAP-Rule" id="MF_00372"/>
    </source>
</evidence>
<comment type="function">
    <text evidence="1">Catalyzes the hydrolytic cleavage of the carbon-nitrogen bond in imidazolone-5-propanoate to yield N-formimidoyl-L-glutamate. It is the third step in the universal histidine degradation pathway.</text>
</comment>
<comment type="catalytic activity">
    <reaction evidence="1">
        <text>4-imidazolone-5-propanoate + H2O = N-formimidoyl-L-glutamate</text>
        <dbReference type="Rhea" id="RHEA:23660"/>
        <dbReference type="ChEBI" id="CHEBI:15377"/>
        <dbReference type="ChEBI" id="CHEBI:58928"/>
        <dbReference type="ChEBI" id="CHEBI:77893"/>
        <dbReference type="EC" id="3.5.2.7"/>
    </reaction>
</comment>
<comment type="cofactor">
    <cofactor evidence="1">
        <name>Zn(2+)</name>
        <dbReference type="ChEBI" id="CHEBI:29105"/>
    </cofactor>
    <cofactor evidence="1">
        <name>Fe(3+)</name>
        <dbReference type="ChEBI" id="CHEBI:29034"/>
    </cofactor>
    <text evidence="1">Binds 1 zinc or iron ion per subunit.</text>
</comment>
<comment type="pathway">
    <text evidence="1">Amino-acid degradation; L-histidine degradation into L-glutamate; N-formimidoyl-L-glutamate from L-histidine: step 3/3.</text>
</comment>
<comment type="subcellular location">
    <subcellularLocation>
        <location evidence="1">Cytoplasm</location>
    </subcellularLocation>
</comment>
<comment type="similarity">
    <text evidence="1">Belongs to the metallo-dependent hydrolases superfamily. HutI family.</text>
</comment>
<reference key="1">
    <citation type="submission" date="2006-08" db="EMBL/GenBank/DDBJ databases">
        <title>Complete sequence of Shewanella frigidimarina NCIMB 400.</title>
        <authorList>
            <consortium name="US DOE Joint Genome Institute"/>
            <person name="Copeland A."/>
            <person name="Lucas S."/>
            <person name="Lapidus A."/>
            <person name="Barry K."/>
            <person name="Detter J.C."/>
            <person name="Glavina del Rio T."/>
            <person name="Hammon N."/>
            <person name="Israni S."/>
            <person name="Dalin E."/>
            <person name="Tice H."/>
            <person name="Pitluck S."/>
            <person name="Fredrickson J.K."/>
            <person name="Kolker E."/>
            <person name="McCuel L.A."/>
            <person name="DiChristina T."/>
            <person name="Nealson K.H."/>
            <person name="Newman D."/>
            <person name="Tiedje J.M."/>
            <person name="Zhou J."/>
            <person name="Romine M.F."/>
            <person name="Culley D.E."/>
            <person name="Serres M."/>
            <person name="Chertkov O."/>
            <person name="Brettin T."/>
            <person name="Bruce D."/>
            <person name="Han C."/>
            <person name="Tapia R."/>
            <person name="Gilna P."/>
            <person name="Schmutz J."/>
            <person name="Larimer F."/>
            <person name="Land M."/>
            <person name="Hauser L."/>
            <person name="Kyrpides N."/>
            <person name="Mikhailova N."/>
            <person name="Richardson P."/>
        </authorList>
    </citation>
    <scope>NUCLEOTIDE SEQUENCE [LARGE SCALE GENOMIC DNA]</scope>
    <source>
        <strain>NCIMB 400</strain>
    </source>
</reference>
<gene>
    <name evidence="1" type="primary">hutI</name>
    <name type="ordered locus">Sfri_3955</name>
</gene>
<proteinExistence type="inferred from homology"/>
<feature type="chain" id="PRO_0000306508" description="Imidazolonepropionase">
    <location>
        <begin position="1"/>
        <end position="410"/>
    </location>
</feature>
<feature type="binding site" evidence="1">
    <location>
        <position position="73"/>
    </location>
    <ligand>
        <name>Fe(3+)</name>
        <dbReference type="ChEBI" id="CHEBI:29034"/>
    </ligand>
</feature>
<feature type="binding site" evidence="1">
    <location>
        <position position="73"/>
    </location>
    <ligand>
        <name>Zn(2+)</name>
        <dbReference type="ChEBI" id="CHEBI:29105"/>
    </ligand>
</feature>
<feature type="binding site" evidence="1">
    <location>
        <position position="75"/>
    </location>
    <ligand>
        <name>Fe(3+)</name>
        <dbReference type="ChEBI" id="CHEBI:29034"/>
    </ligand>
</feature>
<feature type="binding site" evidence="1">
    <location>
        <position position="75"/>
    </location>
    <ligand>
        <name>Zn(2+)</name>
        <dbReference type="ChEBI" id="CHEBI:29105"/>
    </ligand>
</feature>
<feature type="binding site" evidence="1">
    <location>
        <position position="82"/>
    </location>
    <ligand>
        <name>4-imidazolone-5-propanoate</name>
        <dbReference type="ChEBI" id="CHEBI:77893"/>
    </ligand>
</feature>
<feature type="binding site" evidence="1">
    <location>
        <position position="145"/>
    </location>
    <ligand>
        <name>4-imidazolone-5-propanoate</name>
        <dbReference type="ChEBI" id="CHEBI:77893"/>
    </ligand>
</feature>
<feature type="binding site" evidence="1">
    <location>
        <position position="145"/>
    </location>
    <ligand>
        <name>N-formimidoyl-L-glutamate</name>
        <dbReference type="ChEBI" id="CHEBI:58928"/>
    </ligand>
</feature>
<feature type="binding site" evidence="1">
    <location>
        <position position="178"/>
    </location>
    <ligand>
        <name>4-imidazolone-5-propanoate</name>
        <dbReference type="ChEBI" id="CHEBI:77893"/>
    </ligand>
</feature>
<feature type="binding site" evidence="1">
    <location>
        <position position="243"/>
    </location>
    <ligand>
        <name>Fe(3+)</name>
        <dbReference type="ChEBI" id="CHEBI:29034"/>
    </ligand>
</feature>
<feature type="binding site" evidence="1">
    <location>
        <position position="243"/>
    </location>
    <ligand>
        <name>Zn(2+)</name>
        <dbReference type="ChEBI" id="CHEBI:29105"/>
    </ligand>
</feature>
<feature type="binding site" evidence="1">
    <location>
        <position position="246"/>
    </location>
    <ligand>
        <name>4-imidazolone-5-propanoate</name>
        <dbReference type="ChEBI" id="CHEBI:77893"/>
    </ligand>
</feature>
<feature type="binding site" evidence="1">
    <location>
        <position position="318"/>
    </location>
    <ligand>
        <name>Fe(3+)</name>
        <dbReference type="ChEBI" id="CHEBI:29034"/>
    </ligand>
</feature>
<feature type="binding site" evidence="1">
    <location>
        <position position="318"/>
    </location>
    <ligand>
        <name>Zn(2+)</name>
        <dbReference type="ChEBI" id="CHEBI:29105"/>
    </ligand>
</feature>
<feature type="binding site" evidence="1">
    <location>
        <position position="320"/>
    </location>
    <ligand>
        <name>N-formimidoyl-L-glutamate</name>
        <dbReference type="ChEBI" id="CHEBI:58928"/>
    </ligand>
</feature>
<feature type="binding site" evidence="1">
    <location>
        <position position="322"/>
    </location>
    <ligand>
        <name>N-formimidoyl-L-glutamate</name>
        <dbReference type="ChEBI" id="CHEBI:58928"/>
    </ligand>
</feature>
<feature type="binding site" evidence="1">
    <location>
        <position position="323"/>
    </location>
    <ligand>
        <name>4-imidazolone-5-propanoate</name>
        <dbReference type="ChEBI" id="CHEBI:77893"/>
    </ligand>
</feature>
<dbReference type="EC" id="3.5.2.7" evidence="1"/>
<dbReference type="EMBL" id="CP000447">
    <property type="protein sequence ID" value="ABI73780.1"/>
    <property type="molecule type" value="Genomic_DNA"/>
</dbReference>
<dbReference type="RefSeq" id="WP_011639364.1">
    <property type="nucleotide sequence ID" value="NC_008345.1"/>
</dbReference>
<dbReference type="SMR" id="Q07W34"/>
<dbReference type="STRING" id="318167.Sfri_3955"/>
<dbReference type="KEGG" id="sfr:Sfri_3955"/>
<dbReference type="eggNOG" id="COG1228">
    <property type="taxonomic scope" value="Bacteria"/>
</dbReference>
<dbReference type="HOGENOM" id="CLU_041647_0_0_6"/>
<dbReference type="OrthoDB" id="9776455at2"/>
<dbReference type="UniPathway" id="UPA00379">
    <property type="reaction ID" value="UER00551"/>
</dbReference>
<dbReference type="Proteomes" id="UP000000684">
    <property type="component" value="Chromosome"/>
</dbReference>
<dbReference type="GO" id="GO:0005737">
    <property type="term" value="C:cytoplasm"/>
    <property type="evidence" value="ECO:0007669"/>
    <property type="project" value="UniProtKB-SubCell"/>
</dbReference>
<dbReference type="GO" id="GO:0050480">
    <property type="term" value="F:imidazolonepropionase activity"/>
    <property type="evidence" value="ECO:0007669"/>
    <property type="project" value="UniProtKB-UniRule"/>
</dbReference>
<dbReference type="GO" id="GO:0005506">
    <property type="term" value="F:iron ion binding"/>
    <property type="evidence" value="ECO:0007669"/>
    <property type="project" value="UniProtKB-UniRule"/>
</dbReference>
<dbReference type="GO" id="GO:0008270">
    <property type="term" value="F:zinc ion binding"/>
    <property type="evidence" value="ECO:0007669"/>
    <property type="project" value="UniProtKB-UniRule"/>
</dbReference>
<dbReference type="GO" id="GO:0019556">
    <property type="term" value="P:L-histidine catabolic process to glutamate and formamide"/>
    <property type="evidence" value="ECO:0007669"/>
    <property type="project" value="UniProtKB-UniPathway"/>
</dbReference>
<dbReference type="GO" id="GO:0019557">
    <property type="term" value="P:L-histidine catabolic process to glutamate and formate"/>
    <property type="evidence" value="ECO:0007669"/>
    <property type="project" value="UniProtKB-UniPathway"/>
</dbReference>
<dbReference type="CDD" id="cd01296">
    <property type="entry name" value="Imidazolone-5PH"/>
    <property type="match status" value="1"/>
</dbReference>
<dbReference type="FunFam" id="3.20.20.140:FF:000007">
    <property type="entry name" value="Imidazolonepropionase"/>
    <property type="match status" value="1"/>
</dbReference>
<dbReference type="Gene3D" id="3.20.20.140">
    <property type="entry name" value="Metal-dependent hydrolases"/>
    <property type="match status" value="1"/>
</dbReference>
<dbReference type="Gene3D" id="2.30.40.10">
    <property type="entry name" value="Urease, subunit C, domain 1"/>
    <property type="match status" value="1"/>
</dbReference>
<dbReference type="HAMAP" id="MF_00372">
    <property type="entry name" value="HutI"/>
    <property type="match status" value="1"/>
</dbReference>
<dbReference type="InterPro" id="IPR006680">
    <property type="entry name" value="Amidohydro-rel"/>
</dbReference>
<dbReference type="InterPro" id="IPR005920">
    <property type="entry name" value="HutI"/>
</dbReference>
<dbReference type="InterPro" id="IPR011059">
    <property type="entry name" value="Metal-dep_hydrolase_composite"/>
</dbReference>
<dbReference type="InterPro" id="IPR032466">
    <property type="entry name" value="Metal_Hydrolase"/>
</dbReference>
<dbReference type="NCBIfam" id="TIGR01224">
    <property type="entry name" value="hutI"/>
    <property type="match status" value="1"/>
</dbReference>
<dbReference type="PANTHER" id="PTHR42752">
    <property type="entry name" value="IMIDAZOLONEPROPIONASE"/>
    <property type="match status" value="1"/>
</dbReference>
<dbReference type="PANTHER" id="PTHR42752:SF1">
    <property type="entry name" value="IMIDAZOLONEPROPIONASE-RELATED"/>
    <property type="match status" value="1"/>
</dbReference>
<dbReference type="Pfam" id="PF01979">
    <property type="entry name" value="Amidohydro_1"/>
    <property type="match status" value="1"/>
</dbReference>
<dbReference type="SUPFAM" id="SSF51338">
    <property type="entry name" value="Composite domain of metallo-dependent hydrolases"/>
    <property type="match status" value="1"/>
</dbReference>
<dbReference type="SUPFAM" id="SSF51556">
    <property type="entry name" value="Metallo-dependent hydrolases"/>
    <property type="match status" value="1"/>
</dbReference>
<accession>Q07W34</accession>
<name>HUTI_SHEFN</name>